<protein>
    <recommendedName>
        <fullName evidence="1">Glutamine-dependent NAD(+) synthetase</fullName>
        <ecNumber evidence="1">6.3.5.1</ecNumber>
    </recommendedName>
    <alternativeName>
        <fullName evidence="1">NAD(+) synthase [glutamine-hydrolyzing]</fullName>
    </alternativeName>
</protein>
<feature type="chain" id="PRO_0000152239" description="Glutamine-dependent NAD(+) synthetase">
    <location>
        <begin position="1"/>
        <end position="567"/>
    </location>
</feature>
<feature type="domain" description="CN hydrolase" evidence="2">
    <location>
        <begin position="2"/>
        <end position="242"/>
    </location>
</feature>
<feature type="region of interest" description="Ligase">
    <location>
        <begin position="287"/>
        <end position="567"/>
    </location>
</feature>
<feature type="active site" description="Proton acceptor; for glutaminase activity" evidence="1">
    <location>
        <position position="41"/>
    </location>
</feature>
<feature type="active site" description="For glutaminase activity" evidence="1">
    <location>
        <position position="109"/>
    </location>
</feature>
<feature type="active site" description="Nucleophile; for glutaminase activity" evidence="1">
    <location>
        <position position="145"/>
    </location>
</feature>
<feature type="binding site" evidence="1">
    <location>
        <position position="115"/>
    </location>
    <ligand>
        <name>L-glutamine</name>
        <dbReference type="ChEBI" id="CHEBI:58359"/>
    </ligand>
</feature>
<feature type="binding site" evidence="1">
    <location>
        <position position="172"/>
    </location>
    <ligand>
        <name>L-glutamine</name>
        <dbReference type="ChEBI" id="CHEBI:58359"/>
    </ligand>
</feature>
<feature type="binding site" evidence="1">
    <location>
        <position position="178"/>
    </location>
    <ligand>
        <name>L-glutamine</name>
        <dbReference type="ChEBI" id="CHEBI:58359"/>
    </ligand>
</feature>
<feature type="binding site" evidence="1">
    <location>
        <begin position="316"/>
        <end position="323"/>
    </location>
    <ligand>
        <name>ATP</name>
        <dbReference type="ChEBI" id="CHEBI:30616"/>
    </ligand>
</feature>
<feature type="binding site" evidence="1">
    <location>
        <position position="399"/>
    </location>
    <ligand>
        <name>deamido-NAD(+)</name>
        <dbReference type="ChEBI" id="CHEBI:58437"/>
    </ligand>
</feature>
<feature type="binding site" evidence="1">
    <location>
        <position position="423"/>
    </location>
    <ligand>
        <name>ATP</name>
        <dbReference type="ChEBI" id="CHEBI:30616"/>
    </ligand>
</feature>
<feature type="binding site" evidence="1">
    <location>
        <position position="428"/>
    </location>
    <ligand>
        <name>deamido-NAD(+)</name>
        <dbReference type="ChEBI" id="CHEBI:58437"/>
    </ligand>
</feature>
<feature type="binding site" evidence="1">
    <location>
        <position position="538"/>
    </location>
    <ligand>
        <name>deamido-NAD(+)</name>
        <dbReference type="ChEBI" id="CHEBI:58437"/>
    </ligand>
</feature>
<dbReference type="EC" id="6.3.5.1" evidence="1"/>
<dbReference type="EMBL" id="AE000657">
    <property type="protein sequence ID" value="AAC07044.1"/>
    <property type="molecule type" value="Genomic_DNA"/>
</dbReference>
<dbReference type="PIR" id="H70382">
    <property type="entry name" value="H70382"/>
</dbReference>
<dbReference type="RefSeq" id="NP_213654.1">
    <property type="nucleotide sequence ID" value="NC_000918.1"/>
</dbReference>
<dbReference type="RefSeq" id="WP_010880592.1">
    <property type="nucleotide sequence ID" value="NC_000918.1"/>
</dbReference>
<dbReference type="SMR" id="O67091"/>
<dbReference type="STRING" id="224324.aq_959"/>
<dbReference type="EnsemblBacteria" id="AAC07044">
    <property type="protein sequence ID" value="AAC07044"/>
    <property type="gene ID" value="aq_959"/>
</dbReference>
<dbReference type="KEGG" id="aae:aq_959"/>
<dbReference type="PATRIC" id="fig|224324.8.peg.751"/>
<dbReference type="eggNOG" id="COG0171">
    <property type="taxonomic scope" value="Bacteria"/>
</dbReference>
<dbReference type="eggNOG" id="COG0388">
    <property type="taxonomic scope" value="Bacteria"/>
</dbReference>
<dbReference type="HOGENOM" id="CLU_022313_2_0_0"/>
<dbReference type="InParanoid" id="O67091"/>
<dbReference type="OrthoDB" id="9803818at2"/>
<dbReference type="UniPathway" id="UPA00253">
    <property type="reaction ID" value="UER00334"/>
</dbReference>
<dbReference type="Proteomes" id="UP000000798">
    <property type="component" value="Chromosome"/>
</dbReference>
<dbReference type="GO" id="GO:0005737">
    <property type="term" value="C:cytoplasm"/>
    <property type="evidence" value="ECO:0000318"/>
    <property type="project" value="GO_Central"/>
</dbReference>
<dbReference type="GO" id="GO:0005524">
    <property type="term" value="F:ATP binding"/>
    <property type="evidence" value="ECO:0007669"/>
    <property type="project" value="UniProtKB-UniRule"/>
</dbReference>
<dbReference type="GO" id="GO:0004359">
    <property type="term" value="F:glutaminase activity"/>
    <property type="evidence" value="ECO:0007669"/>
    <property type="project" value="InterPro"/>
</dbReference>
<dbReference type="GO" id="GO:0003952">
    <property type="term" value="F:NAD+ synthase (glutamine-hydrolyzing) activity"/>
    <property type="evidence" value="ECO:0007669"/>
    <property type="project" value="UniProtKB-EC"/>
</dbReference>
<dbReference type="GO" id="GO:0008795">
    <property type="term" value="F:NAD+ synthase activity"/>
    <property type="evidence" value="ECO:0007669"/>
    <property type="project" value="UniProtKB-UniRule"/>
</dbReference>
<dbReference type="GO" id="GO:0009435">
    <property type="term" value="P:NAD biosynthetic process"/>
    <property type="evidence" value="ECO:0000318"/>
    <property type="project" value="GO_Central"/>
</dbReference>
<dbReference type="CDD" id="cd07570">
    <property type="entry name" value="GAT_Gln-NAD-synth"/>
    <property type="match status" value="1"/>
</dbReference>
<dbReference type="CDD" id="cd00553">
    <property type="entry name" value="NAD_synthase"/>
    <property type="match status" value="1"/>
</dbReference>
<dbReference type="FunFam" id="3.40.50.620:FF:000106">
    <property type="entry name" value="Glutamine-dependent NAD(+) synthetase"/>
    <property type="match status" value="1"/>
</dbReference>
<dbReference type="FunFam" id="3.60.110.10:FF:000043">
    <property type="entry name" value="Glutamine-dependent NAD(+) synthetase"/>
    <property type="match status" value="1"/>
</dbReference>
<dbReference type="Gene3D" id="3.60.110.10">
    <property type="entry name" value="Carbon-nitrogen hydrolase"/>
    <property type="match status" value="1"/>
</dbReference>
<dbReference type="Gene3D" id="3.40.50.620">
    <property type="entry name" value="HUPs"/>
    <property type="match status" value="1"/>
</dbReference>
<dbReference type="HAMAP" id="MF_02090">
    <property type="entry name" value="NadE_glutamine_dep"/>
    <property type="match status" value="1"/>
</dbReference>
<dbReference type="InterPro" id="IPR003010">
    <property type="entry name" value="C-N_Hydrolase"/>
</dbReference>
<dbReference type="InterPro" id="IPR036526">
    <property type="entry name" value="C-N_Hydrolase_sf"/>
</dbReference>
<dbReference type="InterPro" id="IPR014445">
    <property type="entry name" value="Gln-dep_NAD_synthase"/>
</dbReference>
<dbReference type="InterPro" id="IPR022310">
    <property type="entry name" value="NAD/GMP_synthase"/>
</dbReference>
<dbReference type="InterPro" id="IPR003694">
    <property type="entry name" value="NAD_synthase"/>
</dbReference>
<dbReference type="InterPro" id="IPR014729">
    <property type="entry name" value="Rossmann-like_a/b/a_fold"/>
</dbReference>
<dbReference type="NCBIfam" id="TIGR00552">
    <property type="entry name" value="nadE"/>
    <property type="match status" value="1"/>
</dbReference>
<dbReference type="NCBIfam" id="NF010588">
    <property type="entry name" value="PRK13981.1"/>
    <property type="match status" value="1"/>
</dbReference>
<dbReference type="PANTHER" id="PTHR23090:SF9">
    <property type="entry name" value="GLUTAMINE-DEPENDENT NAD(+) SYNTHETASE"/>
    <property type="match status" value="1"/>
</dbReference>
<dbReference type="PANTHER" id="PTHR23090">
    <property type="entry name" value="NH 3 /GLUTAMINE-DEPENDENT NAD + SYNTHETASE"/>
    <property type="match status" value="1"/>
</dbReference>
<dbReference type="Pfam" id="PF00795">
    <property type="entry name" value="CN_hydrolase"/>
    <property type="match status" value="1"/>
</dbReference>
<dbReference type="Pfam" id="PF02540">
    <property type="entry name" value="NAD_synthase"/>
    <property type="match status" value="1"/>
</dbReference>
<dbReference type="PIRSF" id="PIRSF006630">
    <property type="entry name" value="NADS_GAT"/>
    <property type="match status" value="1"/>
</dbReference>
<dbReference type="SUPFAM" id="SSF52402">
    <property type="entry name" value="Adenine nucleotide alpha hydrolases-like"/>
    <property type="match status" value="1"/>
</dbReference>
<dbReference type="SUPFAM" id="SSF56317">
    <property type="entry name" value="Carbon-nitrogen hydrolase"/>
    <property type="match status" value="1"/>
</dbReference>
<dbReference type="PROSITE" id="PS50263">
    <property type="entry name" value="CN_HYDROLASE"/>
    <property type="match status" value="1"/>
</dbReference>
<organism>
    <name type="scientific">Aquifex aeolicus (strain VF5)</name>
    <dbReference type="NCBI Taxonomy" id="224324"/>
    <lineage>
        <taxon>Bacteria</taxon>
        <taxon>Pseudomonadati</taxon>
        <taxon>Aquificota</taxon>
        <taxon>Aquificia</taxon>
        <taxon>Aquificales</taxon>
        <taxon>Aquificaceae</taxon>
        <taxon>Aquifex</taxon>
    </lineage>
</organism>
<name>NADE_AQUAE</name>
<comment type="function">
    <text evidence="1">Catalyzes the ATP-dependent amidation of deamido-NAD to form NAD. Uses L-glutamine as a nitrogen source.</text>
</comment>
<comment type="catalytic activity">
    <reaction evidence="1">
        <text>deamido-NAD(+) + L-glutamine + ATP + H2O = L-glutamate + AMP + diphosphate + NAD(+) + H(+)</text>
        <dbReference type="Rhea" id="RHEA:24384"/>
        <dbReference type="ChEBI" id="CHEBI:15377"/>
        <dbReference type="ChEBI" id="CHEBI:15378"/>
        <dbReference type="ChEBI" id="CHEBI:29985"/>
        <dbReference type="ChEBI" id="CHEBI:30616"/>
        <dbReference type="ChEBI" id="CHEBI:33019"/>
        <dbReference type="ChEBI" id="CHEBI:57540"/>
        <dbReference type="ChEBI" id="CHEBI:58359"/>
        <dbReference type="ChEBI" id="CHEBI:58437"/>
        <dbReference type="ChEBI" id="CHEBI:456215"/>
        <dbReference type="EC" id="6.3.5.1"/>
    </reaction>
</comment>
<comment type="pathway">
    <text evidence="1">Cofactor biosynthesis; NAD(+) biosynthesis; NAD(+) from deamido-NAD(+) (L-Gln route): step 1/1.</text>
</comment>
<comment type="similarity">
    <text evidence="1 3">In the C-terminal section; belongs to the NAD synthetase family.</text>
</comment>
<keyword id="KW-0067">ATP-binding</keyword>
<keyword id="KW-0378">Hydrolase</keyword>
<keyword id="KW-0436">Ligase</keyword>
<keyword id="KW-0520">NAD</keyword>
<keyword id="KW-0547">Nucleotide-binding</keyword>
<keyword id="KW-1185">Reference proteome</keyword>
<gene>
    <name evidence="1" type="primary">nadE</name>
    <name type="ordered locus">aq_959</name>
</gene>
<accession>O67091</accession>
<proteinExistence type="inferred from homology"/>
<reference key="1">
    <citation type="journal article" date="1998" name="Nature">
        <title>The complete genome of the hyperthermophilic bacterium Aquifex aeolicus.</title>
        <authorList>
            <person name="Deckert G."/>
            <person name="Warren P.V."/>
            <person name="Gaasterland T."/>
            <person name="Young W.G."/>
            <person name="Lenox A.L."/>
            <person name="Graham D.E."/>
            <person name="Overbeek R."/>
            <person name="Snead M.A."/>
            <person name="Keller M."/>
            <person name="Aujay M."/>
            <person name="Huber R."/>
            <person name="Feldman R.A."/>
            <person name="Short J.M."/>
            <person name="Olsen G.J."/>
            <person name="Swanson R.V."/>
        </authorList>
    </citation>
    <scope>NUCLEOTIDE SEQUENCE [LARGE SCALE GENOMIC DNA]</scope>
    <source>
        <strain>VF5</strain>
    </source>
</reference>
<evidence type="ECO:0000255" key="1">
    <source>
        <dbReference type="HAMAP-Rule" id="MF_02090"/>
    </source>
</evidence>
<evidence type="ECO:0000255" key="2">
    <source>
        <dbReference type="PROSITE-ProRule" id="PRU00054"/>
    </source>
</evidence>
<evidence type="ECO:0000305" key="3"/>
<sequence>MLNLTLAQLNFTVGDVEGNKEKILKVIDEYSEKSHIIAFPELSLSGYPPEDLLLQPHFLKECEKAFDQIIHHTRNYDVIVAVGLPYYEFDLYNALAVIHRGEVLGIYKKHFLPNYSVFDEYRYFRKGEEPLMIEVNGHKVSFSICEDIWYPDGVERQTALSGAELIVNVNASPYHVNKYSFKESFLKSRAEDNLCFVAYVNLVGGQDELVFDGRSIVISPFGKLVARAKAFEEDILTVTLDLGEAKRKRLLDLRWREGSYGREKVNVKRSVSLPDKEFFRGRIEENPKEEEEIYAALKLSLRDYVRKNGFEKVVLGLSGGIDSSFVACLAVDALGRENVKGVYMPSQFSSKESYEDAKALAQNLGIEFHVIPIKEIYRAYFNEFEKEICEITFDVADENIQARIRANILFYFSNKFRYLVLSTSNKSETAVGYTTIYGDMAGGFAPIKDVYKTWVYKLARYRNSISPDIPERVFKKPPSAELRPNQTDQDVLPPYEILDQILMLYIEENLSPEEIIRKGLPRDAVYKTINMIRKNEYKRKQAPIGPKITSRAFGKDWRMPVTNKFFK</sequence>